<reference key="1">
    <citation type="journal article" date="2009" name="Genome Biol.">
        <title>A whole-genome assembly of the domestic cow, Bos taurus.</title>
        <authorList>
            <person name="Zimin A.V."/>
            <person name="Delcher A.L."/>
            <person name="Florea L."/>
            <person name="Kelley D.R."/>
            <person name="Schatz M.C."/>
            <person name="Puiu D."/>
            <person name="Hanrahan F."/>
            <person name="Pertea G."/>
            <person name="Van Tassell C.P."/>
            <person name="Sonstegard T.S."/>
            <person name="Marcais G."/>
            <person name="Roberts M."/>
            <person name="Subramanian P."/>
            <person name="Yorke J.A."/>
            <person name="Salzberg S.L."/>
        </authorList>
    </citation>
    <scope>NUCLEOTIDE SEQUENCE [LARGE SCALE GENOMIC DNA]</scope>
    <source>
        <strain>Hereford</strain>
    </source>
</reference>
<reference key="2">
    <citation type="journal article" date="1998" name="J. Biol. Chem.">
        <title>Human HtrA, an evolutionarily conserved serine protease identified as a differentially expressed gene product in osteoarthritic cartilage.</title>
        <authorList>
            <person name="Hu S.I."/>
            <person name="Carozza M."/>
            <person name="Klein M."/>
            <person name="Nantermet P."/>
            <person name="Luk D."/>
            <person name="Crowl R.M."/>
        </authorList>
    </citation>
    <scope>NUCLEOTIDE SEQUENCE [MRNA] OF 118-487</scope>
    <source>
        <tissue>Lung</tissue>
    </source>
</reference>
<protein>
    <recommendedName>
        <fullName>Serine protease HTRA1</fullName>
        <ecNumber>3.4.21.-</ecNumber>
    </recommendedName>
    <alternativeName>
        <fullName>High-temperature requirement A serine peptidase 1</fullName>
    </alternativeName>
    <alternativeName>
        <fullName>Serine protease 11</fullName>
    </alternativeName>
</protein>
<gene>
    <name type="primary">HTRA1</name>
    <name type="synonym">HTRA</name>
    <name type="synonym">PRSS11</name>
</gene>
<proteinExistence type="evidence at transcript level"/>
<comment type="function">
    <text evidence="1">Serine protease with a variety of targets, including extracellular matrix proteins such as fibronectin. HTRA1-generated fibronectin fragments further induce synovial cells to up-regulate MMP1 and MMP3 production. May also degrade proteoglycans, such as aggrecan, decorin and fibromodulin. Through cleavage of proteoglycans, may release soluble FGF-glycosaminoglycan complexes that promote the range and intensity of FGF signals in the extracellular space. Regulates the availability of insulin-like growth factors (IGFs) by cleaving IGF-binding proteins. Inhibits signaling mediated by TGF-beta family members. This activity requires the integrity of the catalytic site, although it is unclear whether TGF-beta proteins are themselves degraded. By acting on TGF-beta signaling, may regulate many physiological processes, including retinal angiogenesis and neuronal survival and maturation during development. Intracellularly, degrades TSC2, leading to the activation of TSC2 downstream targets (By similarity).</text>
</comment>
<comment type="subunit">
    <text evidence="1">Forms homotrimers. In the presence of substrate, may form higher-order multimers in a PDZ-independent manner. Interacts with TGF-beta family members, including BMP4, TGFB1, TGFB2, activin A and GDF5.</text>
</comment>
<comment type="subcellular location">
    <subcellularLocation>
        <location evidence="2">Cell membrane</location>
    </subcellularLocation>
    <subcellularLocation>
        <location evidence="2">Secreted</location>
    </subcellularLocation>
    <subcellularLocation>
        <location evidence="2">Cytoplasm</location>
        <location evidence="2">Cytosol</location>
    </subcellularLocation>
    <text evidence="2">Predominantly secreted. Also found associated with the plasma membrane.</text>
</comment>
<comment type="domain">
    <text evidence="1">The IGFBP N-terminal domain mediates interaction with TSC2 substrate.</text>
</comment>
<comment type="similarity">
    <text evidence="7">Belongs to the peptidase S1C family.</text>
</comment>
<accession>F1N152</accession>
<accession>O97658</accession>
<feature type="signal peptide" evidence="3">
    <location>
        <begin position="1"/>
        <end position="29"/>
    </location>
</feature>
<feature type="chain" id="PRO_0000416250" description="Serine protease HTRA1">
    <location>
        <begin position="30"/>
        <end position="487"/>
    </location>
</feature>
<feature type="domain" description="IGFBP N-terminal" evidence="5">
    <location>
        <begin position="40"/>
        <end position="120"/>
    </location>
</feature>
<feature type="domain" description="Kazal-like" evidence="6">
    <location>
        <begin position="105"/>
        <end position="164"/>
    </location>
</feature>
<feature type="domain" description="PDZ" evidence="4">
    <location>
        <begin position="372"/>
        <end position="474"/>
    </location>
</feature>
<feature type="region of interest" description="Serine protease" evidence="1">
    <location>
        <begin position="211"/>
        <end position="371"/>
    </location>
</feature>
<feature type="active site" description="Charge relay system" evidence="2">
    <location>
        <position position="227"/>
    </location>
</feature>
<feature type="active site" description="Charge relay system" evidence="2">
    <location>
        <position position="257"/>
    </location>
</feature>
<feature type="active site" description="Charge relay system" evidence="2">
    <location>
        <position position="335"/>
    </location>
</feature>
<feature type="site" description="Involved in trimer stabilization" evidence="2">
    <location>
        <position position="176"/>
    </location>
</feature>
<feature type="site" description="Involved in trimer stabilization" evidence="2">
    <location>
        <position position="178"/>
    </location>
</feature>
<feature type="site" description="Involved in trimer stabilization" evidence="2">
    <location>
        <position position="285"/>
    </location>
</feature>
<feature type="disulfide bond" evidence="5">
    <location>
        <begin position="44"/>
        <end position="69"/>
    </location>
</feature>
<feature type="disulfide bond" evidence="5">
    <location>
        <begin position="48"/>
        <end position="71"/>
    </location>
</feature>
<feature type="disulfide bond" evidence="5">
    <location>
        <begin position="53"/>
        <end position="72"/>
    </location>
</feature>
<feature type="disulfide bond" evidence="5">
    <location>
        <begin position="60"/>
        <end position="75"/>
    </location>
</feature>
<feature type="disulfide bond" evidence="5">
    <location>
        <begin position="83"/>
        <end position="96"/>
    </location>
</feature>
<feature type="disulfide bond" evidence="5">
    <location>
        <begin position="90"/>
        <end position="117"/>
    </location>
</feature>
<feature type="disulfide bond" evidence="7">
    <location>
        <begin position="119"/>
        <end position="137"/>
    </location>
</feature>
<feature type="disulfide bond" evidence="6">
    <location>
        <begin position="126"/>
        <end position="162"/>
    </location>
</feature>
<dbReference type="EC" id="3.4.21.-"/>
<dbReference type="EMBL" id="DAAA02059453">
    <property type="status" value="NOT_ANNOTATED_CDS"/>
    <property type="molecule type" value="Genomic_DNA"/>
</dbReference>
<dbReference type="EMBL" id="DAAA02059454">
    <property type="status" value="NOT_ANNOTATED_CDS"/>
    <property type="molecule type" value="Genomic_DNA"/>
</dbReference>
<dbReference type="EMBL" id="AF097707">
    <property type="protein sequence ID" value="AAC95151.1"/>
    <property type="molecule type" value="mRNA"/>
</dbReference>
<dbReference type="RefSeq" id="NP_001269011.1">
    <property type="nucleotide sequence ID" value="NM_001282082.1"/>
</dbReference>
<dbReference type="BMRB" id="F1N152"/>
<dbReference type="SMR" id="F1N152"/>
<dbReference type="FunCoup" id="F1N152">
    <property type="interactions" value="97"/>
</dbReference>
<dbReference type="STRING" id="9913.ENSBTAP00000011042"/>
<dbReference type="PaxDb" id="9913-ENSBTAP00000011042"/>
<dbReference type="GeneID" id="282326"/>
<dbReference type="KEGG" id="bta:282326"/>
<dbReference type="CTD" id="5654"/>
<dbReference type="eggNOG" id="KOG1320">
    <property type="taxonomic scope" value="Eukaryota"/>
</dbReference>
<dbReference type="HOGENOM" id="CLU_020120_6_2_1"/>
<dbReference type="InParanoid" id="F1N152"/>
<dbReference type="OrthoDB" id="4217619at2759"/>
<dbReference type="TreeFam" id="TF323480"/>
<dbReference type="Proteomes" id="UP000009136">
    <property type="component" value="Unplaced"/>
</dbReference>
<dbReference type="GO" id="GO:0062023">
    <property type="term" value="C:collagen-containing extracellular matrix"/>
    <property type="evidence" value="ECO:0000318"/>
    <property type="project" value="GO_Central"/>
</dbReference>
<dbReference type="GO" id="GO:0005829">
    <property type="term" value="C:cytosol"/>
    <property type="evidence" value="ECO:0007669"/>
    <property type="project" value="UniProtKB-SubCell"/>
</dbReference>
<dbReference type="GO" id="GO:0005576">
    <property type="term" value="C:extracellular region"/>
    <property type="evidence" value="ECO:0007669"/>
    <property type="project" value="UniProtKB-SubCell"/>
</dbReference>
<dbReference type="GO" id="GO:0005886">
    <property type="term" value="C:plasma membrane"/>
    <property type="evidence" value="ECO:0007669"/>
    <property type="project" value="UniProtKB-SubCell"/>
</dbReference>
<dbReference type="GO" id="GO:0019838">
    <property type="term" value="F:growth factor binding"/>
    <property type="evidence" value="ECO:0007669"/>
    <property type="project" value="UniProtKB-KW"/>
</dbReference>
<dbReference type="GO" id="GO:0004252">
    <property type="term" value="F:serine-type endopeptidase activity"/>
    <property type="evidence" value="ECO:0000318"/>
    <property type="project" value="GO_Central"/>
</dbReference>
<dbReference type="GO" id="GO:0043065">
    <property type="term" value="P:positive regulation of apoptotic process"/>
    <property type="evidence" value="ECO:0000318"/>
    <property type="project" value="GO_Central"/>
</dbReference>
<dbReference type="GO" id="GO:0012501">
    <property type="term" value="P:programmed cell death"/>
    <property type="evidence" value="ECO:0000318"/>
    <property type="project" value="GO_Central"/>
</dbReference>
<dbReference type="GO" id="GO:0006508">
    <property type="term" value="P:proteolysis"/>
    <property type="evidence" value="ECO:0000318"/>
    <property type="project" value="GO_Central"/>
</dbReference>
<dbReference type="CDD" id="cd06785">
    <property type="entry name" value="cpPDZ_HtrA-like"/>
    <property type="match status" value="1"/>
</dbReference>
<dbReference type="CDD" id="cd00104">
    <property type="entry name" value="KAZAL_FS"/>
    <property type="match status" value="1"/>
</dbReference>
<dbReference type="FunFam" id="2.40.10.120:FF:000002">
    <property type="entry name" value="HtrA serine peptidase 3"/>
    <property type="match status" value="1"/>
</dbReference>
<dbReference type="FunFam" id="4.10.40.20:FF:000004">
    <property type="entry name" value="HtrA serine peptidase 3"/>
    <property type="match status" value="1"/>
</dbReference>
<dbReference type="FunFam" id="3.30.60.30:FF:000026">
    <property type="entry name" value="Insulin-like growth factor-binding protein 7"/>
    <property type="match status" value="1"/>
</dbReference>
<dbReference type="FunFam" id="2.30.42.10:FF:000142">
    <property type="entry name" value="Serine protease HTRA1"/>
    <property type="match status" value="1"/>
</dbReference>
<dbReference type="Gene3D" id="2.30.42.10">
    <property type="match status" value="1"/>
</dbReference>
<dbReference type="Gene3D" id="2.40.10.120">
    <property type="match status" value="1"/>
</dbReference>
<dbReference type="Gene3D" id="3.30.60.30">
    <property type="match status" value="1"/>
</dbReference>
<dbReference type="Gene3D" id="4.10.40.20">
    <property type="match status" value="1"/>
</dbReference>
<dbReference type="InterPro" id="IPR009030">
    <property type="entry name" value="Growth_fac_rcpt_cys_sf"/>
</dbReference>
<dbReference type="InterPro" id="IPR000867">
    <property type="entry name" value="IGFBP-like"/>
</dbReference>
<dbReference type="InterPro" id="IPR002350">
    <property type="entry name" value="Kazal_dom"/>
</dbReference>
<dbReference type="InterPro" id="IPR036058">
    <property type="entry name" value="Kazal_dom_sf"/>
</dbReference>
<dbReference type="InterPro" id="IPR001478">
    <property type="entry name" value="PDZ"/>
</dbReference>
<dbReference type="InterPro" id="IPR041489">
    <property type="entry name" value="PDZ_6"/>
</dbReference>
<dbReference type="InterPro" id="IPR036034">
    <property type="entry name" value="PDZ_sf"/>
</dbReference>
<dbReference type="InterPro" id="IPR009003">
    <property type="entry name" value="Peptidase_S1_PA"/>
</dbReference>
<dbReference type="InterPro" id="IPR001940">
    <property type="entry name" value="Peptidase_S1C"/>
</dbReference>
<dbReference type="PANTHER" id="PTHR22939">
    <property type="entry name" value="SERINE PROTEASE FAMILY S1C HTRA-RELATED"/>
    <property type="match status" value="1"/>
</dbReference>
<dbReference type="PANTHER" id="PTHR22939:SF13">
    <property type="entry name" value="SERINE PROTEASE HTRA1"/>
    <property type="match status" value="1"/>
</dbReference>
<dbReference type="Pfam" id="PF00219">
    <property type="entry name" value="IGFBP"/>
    <property type="match status" value="1"/>
</dbReference>
<dbReference type="Pfam" id="PF07648">
    <property type="entry name" value="Kazal_2"/>
    <property type="match status" value="1"/>
</dbReference>
<dbReference type="Pfam" id="PF17820">
    <property type="entry name" value="PDZ_6"/>
    <property type="match status" value="1"/>
</dbReference>
<dbReference type="Pfam" id="PF13365">
    <property type="entry name" value="Trypsin_2"/>
    <property type="match status" value="1"/>
</dbReference>
<dbReference type="PRINTS" id="PR00834">
    <property type="entry name" value="PROTEASES2C"/>
</dbReference>
<dbReference type="SMART" id="SM00121">
    <property type="entry name" value="IB"/>
    <property type="match status" value="1"/>
</dbReference>
<dbReference type="SMART" id="SM00280">
    <property type="entry name" value="KAZAL"/>
    <property type="match status" value="1"/>
</dbReference>
<dbReference type="SMART" id="SM00228">
    <property type="entry name" value="PDZ"/>
    <property type="match status" value="1"/>
</dbReference>
<dbReference type="SUPFAM" id="SSF57184">
    <property type="entry name" value="Growth factor receptor domain"/>
    <property type="match status" value="1"/>
</dbReference>
<dbReference type="SUPFAM" id="SSF100895">
    <property type="entry name" value="Kazal-type serine protease inhibitors"/>
    <property type="match status" value="1"/>
</dbReference>
<dbReference type="SUPFAM" id="SSF50156">
    <property type="entry name" value="PDZ domain-like"/>
    <property type="match status" value="1"/>
</dbReference>
<dbReference type="SUPFAM" id="SSF50494">
    <property type="entry name" value="Trypsin-like serine proteases"/>
    <property type="match status" value="1"/>
</dbReference>
<dbReference type="PROSITE" id="PS51323">
    <property type="entry name" value="IGFBP_N_2"/>
    <property type="match status" value="1"/>
</dbReference>
<dbReference type="PROSITE" id="PS51465">
    <property type="entry name" value="KAZAL_2"/>
    <property type="match status" value="1"/>
</dbReference>
<dbReference type="PROSITE" id="PS50106">
    <property type="entry name" value="PDZ"/>
    <property type="match status" value="1"/>
</dbReference>
<evidence type="ECO:0000250" key="1"/>
<evidence type="ECO:0000250" key="2">
    <source>
        <dbReference type="UniProtKB" id="Q92743"/>
    </source>
</evidence>
<evidence type="ECO:0000255" key="3"/>
<evidence type="ECO:0000255" key="4">
    <source>
        <dbReference type="PROSITE-ProRule" id="PRU00143"/>
    </source>
</evidence>
<evidence type="ECO:0000255" key="5">
    <source>
        <dbReference type="PROSITE-ProRule" id="PRU00653"/>
    </source>
</evidence>
<evidence type="ECO:0000255" key="6">
    <source>
        <dbReference type="PROSITE-ProRule" id="PRU00798"/>
    </source>
</evidence>
<evidence type="ECO:0000305" key="7"/>
<sequence length="487" mass="51907">MQPPRAPFLPPPTPPLLLLLLLLAAPASAQPARAGRSAPGAAGCPERCDPARCAPPPGSCEGGRVRDACGCCEVCGAPEGAECGLQEGPCGEGLQCVVPFGVPASATVRRRAQSGLCVCASNEPVCGSDAKTYTNLCQLRAASRRSERLHQPPVIVLQRGACGQGQEDPNSLRHKYNFIADVVEKIAPAVVHIELFRKLPFSKREVPVASGSGFIVSEDGLIVTNAHVVTNKHRVKVELKNGATYEAKIKDVDEKADIALIKIDHQGKLPVLLLGRSSELRPGEFVVAIGSPFSLQNTVTTGIVSTTQRGGKELGLRNSDMDYIQTDAIINYGNSGGPLVNLDGEVIGINTLKVTAGISFAIPSDKIKKFLTESHDRQAKGKAITKKKYIGIRMMSLTPSKAKELKDRHRDFPDVLSGAYIIEVIPDTPAEAGGLKENDVIISINGQSVVSANDVSDVIKKESTLNMVVRRGNEDIMITVIPEEIDP</sequence>
<organism>
    <name type="scientific">Bos taurus</name>
    <name type="common">Bovine</name>
    <dbReference type="NCBI Taxonomy" id="9913"/>
    <lineage>
        <taxon>Eukaryota</taxon>
        <taxon>Metazoa</taxon>
        <taxon>Chordata</taxon>
        <taxon>Craniata</taxon>
        <taxon>Vertebrata</taxon>
        <taxon>Euteleostomi</taxon>
        <taxon>Mammalia</taxon>
        <taxon>Eutheria</taxon>
        <taxon>Laurasiatheria</taxon>
        <taxon>Artiodactyla</taxon>
        <taxon>Ruminantia</taxon>
        <taxon>Pecora</taxon>
        <taxon>Bovidae</taxon>
        <taxon>Bovinae</taxon>
        <taxon>Bos</taxon>
    </lineage>
</organism>
<keyword id="KW-1003">Cell membrane</keyword>
<keyword id="KW-0963">Cytoplasm</keyword>
<keyword id="KW-1015">Disulfide bond</keyword>
<keyword id="KW-0340">Growth factor binding</keyword>
<keyword id="KW-0378">Hydrolase</keyword>
<keyword id="KW-0472">Membrane</keyword>
<keyword id="KW-0645">Protease</keyword>
<keyword id="KW-1185">Reference proteome</keyword>
<keyword id="KW-0964">Secreted</keyword>
<keyword id="KW-0720">Serine protease</keyword>
<keyword id="KW-0732">Signal</keyword>
<name>HTRA1_BOVIN</name>